<gene>
    <name evidence="1" type="primary">leuD</name>
    <name type="ordered locus">PC1_3610</name>
</gene>
<dbReference type="EC" id="4.2.1.33" evidence="1"/>
<dbReference type="EMBL" id="CP001657">
    <property type="protein sequence ID" value="ACT14625.1"/>
    <property type="molecule type" value="Genomic_DNA"/>
</dbReference>
<dbReference type="RefSeq" id="WP_015841741.1">
    <property type="nucleotide sequence ID" value="NC_012917.1"/>
</dbReference>
<dbReference type="SMR" id="C6DEW1"/>
<dbReference type="STRING" id="561230.PC1_3610"/>
<dbReference type="KEGG" id="pct:PC1_3610"/>
<dbReference type="eggNOG" id="COG0066">
    <property type="taxonomic scope" value="Bacteria"/>
</dbReference>
<dbReference type="HOGENOM" id="CLU_081378_0_3_6"/>
<dbReference type="OrthoDB" id="9777465at2"/>
<dbReference type="UniPathway" id="UPA00048">
    <property type="reaction ID" value="UER00071"/>
</dbReference>
<dbReference type="Proteomes" id="UP000002736">
    <property type="component" value="Chromosome"/>
</dbReference>
<dbReference type="GO" id="GO:0009316">
    <property type="term" value="C:3-isopropylmalate dehydratase complex"/>
    <property type="evidence" value="ECO:0007669"/>
    <property type="project" value="InterPro"/>
</dbReference>
<dbReference type="GO" id="GO:0003861">
    <property type="term" value="F:3-isopropylmalate dehydratase activity"/>
    <property type="evidence" value="ECO:0007669"/>
    <property type="project" value="UniProtKB-UniRule"/>
</dbReference>
<dbReference type="GO" id="GO:0009098">
    <property type="term" value="P:L-leucine biosynthetic process"/>
    <property type="evidence" value="ECO:0007669"/>
    <property type="project" value="UniProtKB-UniRule"/>
</dbReference>
<dbReference type="CDD" id="cd01577">
    <property type="entry name" value="IPMI_Swivel"/>
    <property type="match status" value="1"/>
</dbReference>
<dbReference type="FunFam" id="3.20.19.10:FF:000003">
    <property type="entry name" value="3-isopropylmalate dehydratase small subunit"/>
    <property type="match status" value="1"/>
</dbReference>
<dbReference type="Gene3D" id="3.20.19.10">
    <property type="entry name" value="Aconitase, domain 4"/>
    <property type="match status" value="1"/>
</dbReference>
<dbReference type="HAMAP" id="MF_01031">
    <property type="entry name" value="LeuD_type1"/>
    <property type="match status" value="1"/>
</dbReference>
<dbReference type="InterPro" id="IPR004431">
    <property type="entry name" value="3-IsopropMal_deHydase_ssu"/>
</dbReference>
<dbReference type="InterPro" id="IPR015928">
    <property type="entry name" value="Aconitase/3IPM_dehydase_swvl"/>
</dbReference>
<dbReference type="InterPro" id="IPR000573">
    <property type="entry name" value="AconitaseA/IPMdHydase_ssu_swvl"/>
</dbReference>
<dbReference type="InterPro" id="IPR033940">
    <property type="entry name" value="IPMI_Swivel"/>
</dbReference>
<dbReference type="InterPro" id="IPR050075">
    <property type="entry name" value="LeuD"/>
</dbReference>
<dbReference type="NCBIfam" id="TIGR00171">
    <property type="entry name" value="leuD"/>
    <property type="match status" value="1"/>
</dbReference>
<dbReference type="NCBIfam" id="NF002458">
    <property type="entry name" value="PRK01641.1"/>
    <property type="match status" value="1"/>
</dbReference>
<dbReference type="PANTHER" id="PTHR43345:SF5">
    <property type="entry name" value="3-ISOPROPYLMALATE DEHYDRATASE SMALL SUBUNIT"/>
    <property type="match status" value="1"/>
</dbReference>
<dbReference type="PANTHER" id="PTHR43345">
    <property type="entry name" value="3-ISOPROPYLMALATE DEHYDRATASE SMALL SUBUNIT 2-RELATED-RELATED"/>
    <property type="match status" value="1"/>
</dbReference>
<dbReference type="Pfam" id="PF00694">
    <property type="entry name" value="Aconitase_C"/>
    <property type="match status" value="1"/>
</dbReference>
<dbReference type="SUPFAM" id="SSF52016">
    <property type="entry name" value="LeuD/IlvD-like"/>
    <property type="match status" value="1"/>
</dbReference>
<name>LEUD_PECCP</name>
<reference key="1">
    <citation type="submission" date="2009-07" db="EMBL/GenBank/DDBJ databases">
        <title>Complete sequence of Pectobacterium carotovorum subsp. carotovorum PC1.</title>
        <authorList>
            <consortium name="US DOE Joint Genome Institute"/>
            <person name="Lucas S."/>
            <person name="Copeland A."/>
            <person name="Lapidus A."/>
            <person name="Glavina del Rio T."/>
            <person name="Tice H."/>
            <person name="Bruce D."/>
            <person name="Goodwin L."/>
            <person name="Pitluck S."/>
            <person name="Munk A.C."/>
            <person name="Brettin T."/>
            <person name="Detter J.C."/>
            <person name="Han C."/>
            <person name="Tapia R."/>
            <person name="Larimer F."/>
            <person name="Land M."/>
            <person name="Hauser L."/>
            <person name="Kyrpides N."/>
            <person name="Mikhailova N."/>
            <person name="Balakrishnan V."/>
            <person name="Glasner J."/>
            <person name="Perna N.T."/>
        </authorList>
    </citation>
    <scope>NUCLEOTIDE SEQUENCE [LARGE SCALE GENOMIC DNA]</scope>
    <source>
        <strain>PC1</strain>
    </source>
</reference>
<organism>
    <name type="scientific">Pectobacterium carotovorum subsp. carotovorum (strain PC1)</name>
    <dbReference type="NCBI Taxonomy" id="561230"/>
    <lineage>
        <taxon>Bacteria</taxon>
        <taxon>Pseudomonadati</taxon>
        <taxon>Pseudomonadota</taxon>
        <taxon>Gammaproteobacteria</taxon>
        <taxon>Enterobacterales</taxon>
        <taxon>Pectobacteriaceae</taxon>
        <taxon>Pectobacterium</taxon>
    </lineage>
</organism>
<accession>C6DEW1</accession>
<comment type="function">
    <text evidence="1">Catalyzes the isomerization between 2-isopropylmalate and 3-isopropylmalate, via the formation of 2-isopropylmaleate.</text>
</comment>
<comment type="catalytic activity">
    <reaction evidence="1">
        <text>(2R,3S)-3-isopropylmalate = (2S)-2-isopropylmalate</text>
        <dbReference type="Rhea" id="RHEA:32287"/>
        <dbReference type="ChEBI" id="CHEBI:1178"/>
        <dbReference type="ChEBI" id="CHEBI:35121"/>
        <dbReference type="EC" id="4.2.1.33"/>
    </reaction>
</comment>
<comment type="pathway">
    <text evidence="1">Amino-acid biosynthesis; L-leucine biosynthesis; L-leucine from 3-methyl-2-oxobutanoate: step 2/4.</text>
</comment>
<comment type="subunit">
    <text evidence="1">Heterodimer of LeuC and LeuD.</text>
</comment>
<comment type="similarity">
    <text evidence="1">Belongs to the LeuD family. LeuD type 1 subfamily.</text>
</comment>
<evidence type="ECO:0000255" key="1">
    <source>
        <dbReference type="HAMAP-Rule" id="MF_01031"/>
    </source>
</evidence>
<sequence length="200" mass="22491">MAKFTQHTGLVVPLDAANVDTDAIIPKQFLQKVTRTGFGQHLFHDWRFLDDAGQQPNPEFVLNKPHYKGASILLARENFGCGSSREHAPWALTDYGFKVVIAPSFADIFYGNSFNNQLLPVKLSDEEVDELFKLVDGQEGINFIVDLENQVVQAGSKSYPFEIDSFRRHCMINGLDSIGLTLQHEASITEYEKNQPAFLN</sequence>
<protein>
    <recommendedName>
        <fullName evidence="1">3-isopropylmalate dehydratase small subunit</fullName>
        <ecNumber evidence="1">4.2.1.33</ecNumber>
    </recommendedName>
    <alternativeName>
        <fullName evidence="1">Alpha-IPM isomerase</fullName>
        <shortName evidence="1">IPMI</shortName>
    </alternativeName>
    <alternativeName>
        <fullName evidence="1">Isopropylmalate isomerase</fullName>
    </alternativeName>
</protein>
<keyword id="KW-0028">Amino-acid biosynthesis</keyword>
<keyword id="KW-0100">Branched-chain amino acid biosynthesis</keyword>
<keyword id="KW-0432">Leucine biosynthesis</keyword>
<keyword id="KW-0456">Lyase</keyword>
<feature type="chain" id="PRO_1000213354" description="3-isopropylmalate dehydratase small subunit">
    <location>
        <begin position="1"/>
        <end position="200"/>
    </location>
</feature>
<proteinExistence type="inferred from homology"/>